<dbReference type="EC" id="1.2.4.1"/>
<dbReference type="EMBL" id="FO080230">
    <property type="protein sequence ID" value="CCD62196.1"/>
    <property type="molecule type" value="Genomic_DNA"/>
</dbReference>
<dbReference type="PIR" id="T32598">
    <property type="entry name" value="T32598"/>
</dbReference>
<dbReference type="RefSeq" id="NP_500340.1">
    <property type="nucleotide sequence ID" value="NM_067939.8"/>
</dbReference>
<dbReference type="SMR" id="O44451"/>
<dbReference type="BioGRID" id="42248">
    <property type="interactions" value="18"/>
</dbReference>
<dbReference type="DIP" id="DIP-24348N"/>
<dbReference type="FunCoup" id="O44451">
    <property type="interactions" value="1963"/>
</dbReference>
<dbReference type="IntAct" id="O44451">
    <property type="interactions" value="6"/>
</dbReference>
<dbReference type="STRING" id="6239.C04C3.3.1"/>
<dbReference type="PaxDb" id="6239-C04C3.3"/>
<dbReference type="PeptideAtlas" id="O44451"/>
<dbReference type="EnsemblMetazoa" id="C04C3.3.1">
    <property type="protein sequence ID" value="C04C3.3.1"/>
    <property type="gene ID" value="WBGene00015413"/>
</dbReference>
<dbReference type="GeneID" id="177108"/>
<dbReference type="KEGG" id="cel:CELE_C04C3.3"/>
<dbReference type="UCSC" id="C04C3.3.1">
    <property type="organism name" value="c. elegans"/>
</dbReference>
<dbReference type="AGR" id="WB:WBGene00015413"/>
<dbReference type="CTD" id="177108"/>
<dbReference type="WormBase" id="C04C3.3">
    <property type="protein sequence ID" value="CE27647"/>
    <property type="gene ID" value="WBGene00015413"/>
    <property type="gene designation" value="pdhb-1"/>
</dbReference>
<dbReference type="eggNOG" id="KOG0524">
    <property type="taxonomic scope" value="Eukaryota"/>
</dbReference>
<dbReference type="GeneTree" id="ENSGT00940000155146"/>
<dbReference type="HOGENOM" id="CLU_012907_1_1_1"/>
<dbReference type="InParanoid" id="O44451"/>
<dbReference type="OMA" id="WYANCPG"/>
<dbReference type="OrthoDB" id="10266385at2759"/>
<dbReference type="PhylomeDB" id="O44451"/>
<dbReference type="Reactome" id="R-CEL-204174">
    <property type="pathway name" value="Regulation of pyruvate dehydrogenase (PDH) complex"/>
</dbReference>
<dbReference type="Reactome" id="R-CEL-5362517">
    <property type="pathway name" value="Signaling by Retinoic Acid"/>
</dbReference>
<dbReference type="Reactome" id="R-CEL-9837999">
    <property type="pathway name" value="Mitochondrial protein degradation"/>
</dbReference>
<dbReference type="Reactome" id="R-CEL-9861559">
    <property type="pathway name" value="PDH complex synthesizes acetyl-CoA from PYR"/>
</dbReference>
<dbReference type="PRO" id="PR:O44451"/>
<dbReference type="Proteomes" id="UP000001940">
    <property type="component" value="Chromosome IV"/>
</dbReference>
<dbReference type="Bgee" id="WBGene00015413">
    <property type="expression patterns" value="Expressed in germ line (C elegans) and 4 other cell types or tissues"/>
</dbReference>
<dbReference type="GO" id="GO:0005759">
    <property type="term" value="C:mitochondrial matrix"/>
    <property type="evidence" value="ECO:0007669"/>
    <property type="project" value="UniProtKB-SubCell"/>
</dbReference>
<dbReference type="GO" id="GO:0005739">
    <property type="term" value="C:mitochondrion"/>
    <property type="evidence" value="ECO:0007005"/>
    <property type="project" value="WormBase"/>
</dbReference>
<dbReference type="GO" id="GO:0045254">
    <property type="term" value="C:pyruvate dehydrogenase complex"/>
    <property type="evidence" value="ECO:0000318"/>
    <property type="project" value="GO_Central"/>
</dbReference>
<dbReference type="GO" id="GO:0046872">
    <property type="term" value="F:metal ion binding"/>
    <property type="evidence" value="ECO:0007669"/>
    <property type="project" value="UniProtKB-KW"/>
</dbReference>
<dbReference type="GO" id="GO:0004739">
    <property type="term" value="F:pyruvate dehydrogenase (acetyl-transferring) activity"/>
    <property type="evidence" value="ECO:0000318"/>
    <property type="project" value="GO_Central"/>
</dbReference>
<dbReference type="GO" id="GO:0006086">
    <property type="term" value="P:pyruvate decarboxylation to acetyl-CoA"/>
    <property type="evidence" value="ECO:0000318"/>
    <property type="project" value="GO_Central"/>
</dbReference>
<dbReference type="CDD" id="cd07036">
    <property type="entry name" value="TPP_PYR_E1-PDHc-beta_like"/>
    <property type="match status" value="1"/>
</dbReference>
<dbReference type="FunFam" id="3.40.50.920:FF:000001">
    <property type="entry name" value="Pyruvate dehydrogenase E1 beta subunit"/>
    <property type="match status" value="1"/>
</dbReference>
<dbReference type="FunFam" id="3.40.50.970:FF:000006">
    <property type="entry name" value="Pyruvate dehydrogenase E1 component subunit beta"/>
    <property type="match status" value="1"/>
</dbReference>
<dbReference type="Gene3D" id="3.40.50.920">
    <property type="match status" value="1"/>
</dbReference>
<dbReference type="Gene3D" id="3.40.50.970">
    <property type="match status" value="1"/>
</dbReference>
<dbReference type="InterPro" id="IPR027110">
    <property type="entry name" value="PDHB_mito-type"/>
</dbReference>
<dbReference type="InterPro" id="IPR029061">
    <property type="entry name" value="THDP-binding"/>
</dbReference>
<dbReference type="InterPro" id="IPR009014">
    <property type="entry name" value="Transketo_C/PFOR_II"/>
</dbReference>
<dbReference type="InterPro" id="IPR005475">
    <property type="entry name" value="Transketolase-like_Pyr-bd"/>
</dbReference>
<dbReference type="InterPro" id="IPR033248">
    <property type="entry name" value="Transketolase_C"/>
</dbReference>
<dbReference type="NCBIfam" id="NF006667">
    <property type="entry name" value="PRK09212.1"/>
    <property type="match status" value="1"/>
</dbReference>
<dbReference type="NCBIfam" id="NF008854">
    <property type="entry name" value="PRK11892.1"/>
    <property type="match status" value="1"/>
</dbReference>
<dbReference type="PANTHER" id="PTHR11624">
    <property type="entry name" value="DEHYDROGENASE RELATED"/>
    <property type="match status" value="1"/>
</dbReference>
<dbReference type="PANTHER" id="PTHR11624:SF96">
    <property type="entry name" value="PYRUVATE DEHYDROGENASE E1 COMPONENT SUBUNIT BETA, MITOCHONDRIAL"/>
    <property type="match status" value="1"/>
</dbReference>
<dbReference type="Pfam" id="PF02779">
    <property type="entry name" value="Transket_pyr"/>
    <property type="match status" value="1"/>
</dbReference>
<dbReference type="Pfam" id="PF02780">
    <property type="entry name" value="Transketolase_C"/>
    <property type="match status" value="1"/>
</dbReference>
<dbReference type="SMART" id="SM00861">
    <property type="entry name" value="Transket_pyr"/>
    <property type="match status" value="1"/>
</dbReference>
<dbReference type="SUPFAM" id="SSF52518">
    <property type="entry name" value="Thiamin diphosphate-binding fold (THDP-binding)"/>
    <property type="match status" value="1"/>
</dbReference>
<dbReference type="SUPFAM" id="SSF52922">
    <property type="entry name" value="TK C-terminal domain-like"/>
    <property type="match status" value="1"/>
</dbReference>
<organism>
    <name type="scientific">Caenorhabditis elegans</name>
    <dbReference type="NCBI Taxonomy" id="6239"/>
    <lineage>
        <taxon>Eukaryota</taxon>
        <taxon>Metazoa</taxon>
        <taxon>Ecdysozoa</taxon>
        <taxon>Nematoda</taxon>
        <taxon>Chromadorea</taxon>
        <taxon>Rhabditida</taxon>
        <taxon>Rhabditina</taxon>
        <taxon>Rhabditomorpha</taxon>
        <taxon>Rhabditoidea</taxon>
        <taxon>Rhabditidae</taxon>
        <taxon>Peloderinae</taxon>
        <taxon>Caenorhabditis</taxon>
    </lineage>
</organism>
<reference key="1">
    <citation type="journal article" date="1998" name="Science">
        <title>Genome sequence of the nematode C. elegans: a platform for investigating biology.</title>
        <authorList>
            <consortium name="The C. elegans sequencing consortium"/>
        </authorList>
    </citation>
    <scope>NUCLEOTIDE SEQUENCE [LARGE SCALE GENOMIC DNA]</scope>
    <source>
        <strain>Bristol N2</strain>
    </source>
</reference>
<reference evidence="4" key="2">
    <citation type="submission" date="2005-09" db="UniProtKB">
        <authorList>
            <person name="Bienvenut W.V."/>
        </authorList>
    </citation>
    <scope>PROTEIN SEQUENCE OF 130-137; 237-246 AND 262-272</scope>
    <scope>IDENTIFICATION BY MASS SPECTROMETRY</scope>
</reference>
<comment type="function">
    <text evidence="2">The pyruvate dehydrogenase complex catalyzes the overall conversion of pyruvate to acetyl-CoA and CO(2). It contains multiple copies of three enzymatic components: pyruvate dehydrogenase (E1), dihydrolipoamide acetyltransferase (E2) and lipoamide dehydrogenase (E3) (By similarity).</text>
</comment>
<comment type="catalytic activity">
    <reaction evidence="2">
        <text>N(6)-[(R)-lipoyl]-L-lysyl-[protein] + pyruvate + H(+) = N(6)-[(R)-S(8)-acetyldihydrolipoyl]-L-lysyl-[protein] + CO2</text>
        <dbReference type="Rhea" id="RHEA:19189"/>
        <dbReference type="Rhea" id="RHEA-COMP:10474"/>
        <dbReference type="Rhea" id="RHEA-COMP:10478"/>
        <dbReference type="ChEBI" id="CHEBI:15361"/>
        <dbReference type="ChEBI" id="CHEBI:15378"/>
        <dbReference type="ChEBI" id="CHEBI:16526"/>
        <dbReference type="ChEBI" id="CHEBI:83099"/>
        <dbReference type="ChEBI" id="CHEBI:83111"/>
        <dbReference type="EC" id="1.2.4.1"/>
    </reaction>
</comment>
<comment type="cofactor">
    <cofactor evidence="2">
        <name>thiamine diphosphate</name>
        <dbReference type="ChEBI" id="CHEBI:58937"/>
    </cofactor>
</comment>
<comment type="subunit">
    <text evidence="1">Tetramer of 2 alpha and 2 beta subunits.</text>
</comment>
<comment type="subcellular location">
    <subcellularLocation>
        <location evidence="1">Mitochondrion matrix</location>
    </subcellularLocation>
</comment>
<feature type="transit peptide" description="Mitochondrion" evidence="3">
    <location>
        <begin position="1"/>
        <end position="21"/>
    </location>
</feature>
<feature type="chain" id="PRO_0000042638" description="Pyruvate dehydrogenase E1 component subunit beta, mitochondrial">
    <location>
        <begin position="22"/>
        <end position="352"/>
    </location>
</feature>
<feature type="binding site" evidence="2">
    <location>
        <position position="81"/>
    </location>
    <ligand>
        <name>thiamine diphosphate</name>
        <dbReference type="ChEBI" id="CHEBI:58937"/>
        <note>ligand shared with alpha subunit</note>
    </ligand>
</feature>
<feature type="binding site" evidence="2">
    <location>
        <position position="134"/>
    </location>
    <ligand>
        <name>K(+)</name>
        <dbReference type="ChEBI" id="CHEBI:29103"/>
        <note>structural</note>
    </ligand>
</feature>
<feature type="binding site" evidence="2">
    <location>
        <position position="182"/>
    </location>
    <ligand>
        <name>K(+)</name>
        <dbReference type="ChEBI" id="CHEBI:29103"/>
        <note>structural</note>
    </ligand>
</feature>
<feature type="binding site" evidence="2">
    <location>
        <position position="183"/>
    </location>
    <ligand>
        <name>K(+)</name>
        <dbReference type="ChEBI" id="CHEBI:29103"/>
        <note>structural</note>
    </ligand>
</feature>
<feature type="binding site" evidence="2">
    <location>
        <position position="185"/>
    </location>
    <ligand>
        <name>K(+)</name>
        <dbReference type="ChEBI" id="CHEBI:29103"/>
        <note>structural</note>
    </ligand>
</feature>
<feature type="binding site" evidence="2">
    <location>
        <position position="187"/>
    </location>
    <ligand>
        <name>K(+)</name>
        <dbReference type="ChEBI" id="CHEBI:29103"/>
        <note>structural</note>
    </ligand>
</feature>
<protein>
    <recommendedName>
        <fullName>Pyruvate dehydrogenase E1 component subunit beta, mitochondrial</fullName>
        <shortName>PDHE1-B</shortName>
        <ecNumber>1.2.4.1</ecNumber>
    </recommendedName>
</protein>
<name>ODPB_CAEEL</name>
<keyword id="KW-0903">Direct protein sequencing</keyword>
<keyword id="KW-0479">Metal-binding</keyword>
<keyword id="KW-0496">Mitochondrion</keyword>
<keyword id="KW-0560">Oxidoreductase</keyword>
<keyword id="KW-0630">Potassium</keyword>
<keyword id="KW-0670">Pyruvate</keyword>
<keyword id="KW-1185">Reference proteome</keyword>
<keyword id="KW-0786">Thiamine pyrophosphate</keyword>
<keyword id="KW-0809">Transit peptide</keyword>
<proteinExistence type="evidence at protein level"/>
<sequence>MALRKCGNLFVARLAGTSTRAASTMTVRDALNQAMDEEIKRDDRVFLMGEEVAQYDGAYKISKGLWKKHGDKRVVDTPITEMGFAGIAVGAAFAGLRPICEFMTFNFSMQAIDQIINSAAKTYYMSAGRVPVPIVFRGPNGAAAGVAAQHSQDFSAWYAHCPGLKVVCPYSAEDAKGLLKAAIRDDNPVVFLENEILYGQSFPVGDEVLSDDFVVPIGKAKIERAGDHVTIVSYSRGVEFSLEAAKQLEAIGVSAEVINLRSLRPFDFESIRQSVHKTHHLVSVETGWPFAGIGSEIAAQVMESDVFDQLDAPLLRVTGVDVPMPYTQTLEAAALPTAEHVVKAVKKSLNIA</sequence>
<evidence type="ECO:0000250" key="1"/>
<evidence type="ECO:0000250" key="2">
    <source>
        <dbReference type="UniProtKB" id="P11177"/>
    </source>
</evidence>
<evidence type="ECO:0000255" key="3"/>
<evidence type="ECO:0000305" key="4"/>
<gene>
    <name type="primary">pdhb-1</name>
    <name type="ORF">C04C3.3</name>
</gene>
<accession>O44451</accession>